<evidence type="ECO:0000305" key="1"/>
<sequence length="232" mass="24625">MTVSTTSLCTPIVKICGLTVEAAHCAISSGADLIGMILVPDLKRTVQQTKLKAISRAVTRIPGVPTSPSRGIDRPSHGLVRGTFSADYTSWPLVVGVFRNQSLDEVLRMLRNYDLDIVQLHGSEPLHQWTREIPVPVIKKFGLGEDDLMAPGLHAVTLLDGGAGGEGQKISWEGLPGSGAFMLAGGLTVDNVAVAVKIPNVAGVDVSSGVATDGMQDLEKNCRCLFRNAKGW</sequence>
<proteinExistence type="inferred from homology"/>
<keyword id="KW-0028">Amino-acid biosynthesis</keyword>
<keyword id="KW-0057">Aromatic amino acid biosynthesis</keyword>
<keyword id="KW-0413">Isomerase</keyword>
<keyword id="KW-0822">Tryptophan biosynthesis</keyword>
<protein>
    <recommendedName>
        <fullName>N-(5'-phosphoribosyl)anthranilate isomerase</fullName>
        <shortName>PRAI</shortName>
        <ecNumber>5.3.1.24</ecNumber>
    </recommendedName>
</protein>
<name>TRPF_LIPST</name>
<dbReference type="EC" id="5.3.1.24"/>
<dbReference type="EMBL" id="Z68292">
    <property type="protein sequence ID" value="CAA92584.1"/>
    <property type="molecule type" value="Genomic_DNA"/>
</dbReference>
<dbReference type="PIR" id="S70355">
    <property type="entry name" value="S70355"/>
</dbReference>
<dbReference type="SMR" id="Q01128"/>
<dbReference type="UniPathway" id="UPA00035">
    <property type="reaction ID" value="UER00042"/>
</dbReference>
<dbReference type="GO" id="GO:0004640">
    <property type="term" value="F:phosphoribosylanthranilate isomerase activity"/>
    <property type="evidence" value="ECO:0007669"/>
    <property type="project" value="UniProtKB-EC"/>
</dbReference>
<dbReference type="GO" id="GO:0000162">
    <property type="term" value="P:L-tryptophan biosynthetic process"/>
    <property type="evidence" value="ECO:0007669"/>
    <property type="project" value="UniProtKB-UniPathway"/>
</dbReference>
<dbReference type="CDD" id="cd00405">
    <property type="entry name" value="PRAI"/>
    <property type="match status" value="1"/>
</dbReference>
<dbReference type="Gene3D" id="3.20.20.70">
    <property type="entry name" value="Aldolase class I"/>
    <property type="match status" value="1"/>
</dbReference>
<dbReference type="HAMAP" id="MF_00135">
    <property type="entry name" value="PRAI"/>
    <property type="match status" value="1"/>
</dbReference>
<dbReference type="InterPro" id="IPR013785">
    <property type="entry name" value="Aldolase_TIM"/>
</dbReference>
<dbReference type="InterPro" id="IPR001240">
    <property type="entry name" value="PRAI_dom"/>
</dbReference>
<dbReference type="InterPro" id="IPR011060">
    <property type="entry name" value="RibuloseP-bd_barrel"/>
</dbReference>
<dbReference type="InterPro" id="IPR044643">
    <property type="entry name" value="TrpF_fam"/>
</dbReference>
<dbReference type="PANTHER" id="PTHR42894">
    <property type="entry name" value="N-(5'-PHOSPHORIBOSYL)ANTHRANILATE ISOMERASE"/>
    <property type="match status" value="1"/>
</dbReference>
<dbReference type="PANTHER" id="PTHR42894:SF1">
    <property type="entry name" value="N-(5'-PHOSPHORIBOSYL)ANTHRANILATE ISOMERASE"/>
    <property type="match status" value="1"/>
</dbReference>
<dbReference type="Pfam" id="PF00697">
    <property type="entry name" value="PRAI"/>
    <property type="match status" value="1"/>
</dbReference>
<dbReference type="SUPFAM" id="SSF51366">
    <property type="entry name" value="Ribulose-phoshate binding barrel"/>
    <property type="match status" value="1"/>
</dbReference>
<comment type="catalytic activity">
    <reaction>
        <text>N-(5-phospho-beta-D-ribosyl)anthranilate = 1-(2-carboxyphenylamino)-1-deoxy-D-ribulose 5-phosphate</text>
        <dbReference type="Rhea" id="RHEA:21540"/>
        <dbReference type="ChEBI" id="CHEBI:18277"/>
        <dbReference type="ChEBI" id="CHEBI:58613"/>
        <dbReference type="EC" id="5.3.1.24"/>
    </reaction>
</comment>
<comment type="pathway">
    <text>Amino-acid biosynthesis; L-tryptophan biosynthesis; L-tryptophan from chorismate: step 3/5.</text>
</comment>
<comment type="similarity">
    <text evidence="1">Belongs to the TrpF family.</text>
</comment>
<feature type="chain" id="PRO_0000154334" description="N-(5'-phosphoribosyl)anthranilate isomerase">
    <location>
        <begin position="1"/>
        <end position="232"/>
    </location>
</feature>
<reference key="1">
    <citation type="journal article" date="1996" name="Curr. Genet.">
        <title>Electrophoretic karyotype of the amylolytic yeast Lipomyces starkeyi and cloning, sequencing and chromosomal localization of its TRP1 gene.</title>
        <authorList>
            <person name="Bignell G.R."/>
            <person name="Bruce I.J."/>
            <person name="Evans I.H."/>
        </authorList>
    </citation>
    <scope>NUCLEOTIDE SEQUENCE [GENOMIC DNA]</scope>
    <source>
        <strain>ATCC 12659 / NCYC 1436 / NRRL Y-1389</strain>
    </source>
</reference>
<accession>Q01128</accession>
<organism>
    <name type="scientific">Lipomyces starkeyi</name>
    <name type="common">Oleaginous yeast</name>
    <dbReference type="NCBI Taxonomy" id="29829"/>
    <lineage>
        <taxon>Eukaryota</taxon>
        <taxon>Fungi</taxon>
        <taxon>Dikarya</taxon>
        <taxon>Ascomycota</taxon>
        <taxon>Saccharomycotina</taxon>
        <taxon>Lipomycetes</taxon>
        <taxon>Lipomycetales</taxon>
        <taxon>Lipomycetaceae</taxon>
        <taxon>Lipomyces</taxon>
    </lineage>
</organism>
<gene>
    <name type="primary">TRP1</name>
</gene>